<keyword id="KW-0067">ATP-binding</keyword>
<keyword id="KW-0414">Isoprene biosynthesis</keyword>
<keyword id="KW-0418">Kinase</keyword>
<keyword id="KW-0547">Nucleotide-binding</keyword>
<keyword id="KW-0808">Transferase</keyword>
<dbReference type="EC" id="2.7.1.148" evidence="1"/>
<dbReference type="EMBL" id="AP009240">
    <property type="protein sequence ID" value="BAG76782.1"/>
    <property type="molecule type" value="Genomic_DNA"/>
</dbReference>
<dbReference type="RefSeq" id="WP_001260333.1">
    <property type="nucleotide sequence ID" value="NC_011415.1"/>
</dbReference>
<dbReference type="SMR" id="B6I9S3"/>
<dbReference type="GeneID" id="93775273"/>
<dbReference type="KEGG" id="ecy:ECSE_1258"/>
<dbReference type="HOGENOM" id="CLU_053057_3_0_6"/>
<dbReference type="UniPathway" id="UPA00056">
    <property type="reaction ID" value="UER00094"/>
</dbReference>
<dbReference type="Proteomes" id="UP000008199">
    <property type="component" value="Chromosome"/>
</dbReference>
<dbReference type="GO" id="GO:0050515">
    <property type="term" value="F:4-(cytidine 5'-diphospho)-2-C-methyl-D-erythritol kinase activity"/>
    <property type="evidence" value="ECO:0007669"/>
    <property type="project" value="UniProtKB-UniRule"/>
</dbReference>
<dbReference type="GO" id="GO:0005524">
    <property type="term" value="F:ATP binding"/>
    <property type="evidence" value="ECO:0007669"/>
    <property type="project" value="UniProtKB-UniRule"/>
</dbReference>
<dbReference type="GO" id="GO:0019288">
    <property type="term" value="P:isopentenyl diphosphate biosynthetic process, methylerythritol 4-phosphate pathway"/>
    <property type="evidence" value="ECO:0007669"/>
    <property type="project" value="UniProtKB-UniRule"/>
</dbReference>
<dbReference type="GO" id="GO:0016114">
    <property type="term" value="P:terpenoid biosynthetic process"/>
    <property type="evidence" value="ECO:0007669"/>
    <property type="project" value="InterPro"/>
</dbReference>
<dbReference type="FunFam" id="3.30.230.10:FF:000022">
    <property type="entry name" value="4-diphosphocytidyl-2-C-methyl-D-erythritol kinase"/>
    <property type="match status" value="1"/>
</dbReference>
<dbReference type="FunFam" id="3.30.70.890:FF:000004">
    <property type="entry name" value="4-diphosphocytidyl-2-C-methyl-D-erythritol kinase"/>
    <property type="match status" value="1"/>
</dbReference>
<dbReference type="Gene3D" id="3.30.230.10">
    <property type="match status" value="1"/>
</dbReference>
<dbReference type="Gene3D" id="3.30.70.890">
    <property type="entry name" value="GHMP kinase, C-terminal domain"/>
    <property type="match status" value="1"/>
</dbReference>
<dbReference type="HAMAP" id="MF_00061">
    <property type="entry name" value="IspE"/>
    <property type="match status" value="1"/>
</dbReference>
<dbReference type="InterPro" id="IPR013750">
    <property type="entry name" value="GHMP_kinase_C_dom"/>
</dbReference>
<dbReference type="InterPro" id="IPR036554">
    <property type="entry name" value="GHMP_kinase_C_sf"/>
</dbReference>
<dbReference type="InterPro" id="IPR006204">
    <property type="entry name" value="GHMP_kinase_N_dom"/>
</dbReference>
<dbReference type="InterPro" id="IPR004424">
    <property type="entry name" value="IspE"/>
</dbReference>
<dbReference type="InterPro" id="IPR020568">
    <property type="entry name" value="Ribosomal_Su5_D2-typ_SF"/>
</dbReference>
<dbReference type="InterPro" id="IPR014721">
    <property type="entry name" value="Ribsml_uS5_D2-typ_fold_subgr"/>
</dbReference>
<dbReference type="NCBIfam" id="TIGR00154">
    <property type="entry name" value="ispE"/>
    <property type="match status" value="1"/>
</dbReference>
<dbReference type="PANTHER" id="PTHR43527">
    <property type="entry name" value="4-DIPHOSPHOCYTIDYL-2-C-METHYL-D-ERYTHRITOL KINASE, CHLOROPLASTIC"/>
    <property type="match status" value="1"/>
</dbReference>
<dbReference type="PANTHER" id="PTHR43527:SF2">
    <property type="entry name" value="4-DIPHOSPHOCYTIDYL-2-C-METHYL-D-ERYTHRITOL KINASE, CHLOROPLASTIC"/>
    <property type="match status" value="1"/>
</dbReference>
<dbReference type="Pfam" id="PF08544">
    <property type="entry name" value="GHMP_kinases_C"/>
    <property type="match status" value="1"/>
</dbReference>
<dbReference type="Pfam" id="PF00288">
    <property type="entry name" value="GHMP_kinases_N"/>
    <property type="match status" value="1"/>
</dbReference>
<dbReference type="PIRSF" id="PIRSF010376">
    <property type="entry name" value="IspE"/>
    <property type="match status" value="1"/>
</dbReference>
<dbReference type="SUPFAM" id="SSF55060">
    <property type="entry name" value="GHMP Kinase, C-terminal domain"/>
    <property type="match status" value="1"/>
</dbReference>
<dbReference type="SUPFAM" id="SSF54211">
    <property type="entry name" value="Ribosomal protein S5 domain 2-like"/>
    <property type="match status" value="1"/>
</dbReference>
<sequence length="283" mass="30953">MRTQWPSPAKLNLFLYITGQRADGYHTLQTLFQFLDYGDTISIELRDDGDIRLLTPVEGVEHEDNLIVRAARLLMKTAADSGRLPTGSGANISIDKRLPMGGGLGGGSSNAATVLVALNHLWQCGLSMDELAEMGLTLGADVPVFVRGHAAFAEGVGEILTPVDPPEKWYLVAHPGVSIPTPVIFKDPELPRNTPKRSIETLLKCEFSNDCEVIARKRFREVDAVLSWLLEYAPSRLTGTGACVFAEFDTESEARQVLEQAPEWLNGFVAKGVNLSPLHRAML</sequence>
<comment type="function">
    <text evidence="1">Catalyzes the phosphorylation of the position 2 hydroxy group of 4-diphosphocytidyl-2C-methyl-D-erythritol.</text>
</comment>
<comment type="catalytic activity">
    <reaction evidence="1">
        <text>4-CDP-2-C-methyl-D-erythritol + ATP = 4-CDP-2-C-methyl-D-erythritol 2-phosphate + ADP + H(+)</text>
        <dbReference type="Rhea" id="RHEA:18437"/>
        <dbReference type="ChEBI" id="CHEBI:15378"/>
        <dbReference type="ChEBI" id="CHEBI:30616"/>
        <dbReference type="ChEBI" id="CHEBI:57823"/>
        <dbReference type="ChEBI" id="CHEBI:57919"/>
        <dbReference type="ChEBI" id="CHEBI:456216"/>
        <dbReference type="EC" id="2.7.1.148"/>
    </reaction>
</comment>
<comment type="pathway">
    <text evidence="1">Isoprenoid biosynthesis; isopentenyl diphosphate biosynthesis via DXP pathway; isopentenyl diphosphate from 1-deoxy-D-xylulose 5-phosphate: step 3/6.</text>
</comment>
<comment type="subunit">
    <text evidence="1">Homodimer.</text>
</comment>
<comment type="similarity">
    <text evidence="1">Belongs to the GHMP kinase family. IspE subfamily.</text>
</comment>
<protein>
    <recommendedName>
        <fullName evidence="1">4-diphosphocytidyl-2-C-methyl-D-erythritol kinase</fullName>
        <shortName evidence="1">CMK</shortName>
        <ecNumber evidence="1">2.7.1.148</ecNumber>
    </recommendedName>
    <alternativeName>
        <fullName evidence="1">4-(cytidine-5'-diphospho)-2-C-methyl-D-erythritol kinase</fullName>
    </alternativeName>
</protein>
<accession>B6I9S3</accession>
<reference key="1">
    <citation type="journal article" date="2008" name="DNA Res.">
        <title>Complete genome sequence and comparative analysis of the wild-type commensal Escherichia coli strain SE11 isolated from a healthy adult.</title>
        <authorList>
            <person name="Oshima K."/>
            <person name="Toh H."/>
            <person name="Ogura Y."/>
            <person name="Sasamoto H."/>
            <person name="Morita H."/>
            <person name="Park S.-H."/>
            <person name="Ooka T."/>
            <person name="Iyoda S."/>
            <person name="Taylor T.D."/>
            <person name="Hayashi T."/>
            <person name="Itoh K."/>
            <person name="Hattori M."/>
        </authorList>
    </citation>
    <scope>NUCLEOTIDE SEQUENCE [LARGE SCALE GENOMIC DNA]</scope>
    <source>
        <strain>SE11</strain>
    </source>
</reference>
<name>ISPE_ECOSE</name>
<organism>
    <name type="scientific">Escherichia coli (strain SE11)</name>
    <dbReference type="NCBI Taxonomy" id="409438"/>
    <lineage>
        <taxon>Bacteria</taxon>
        <taxon>Pseudomonadati</taxon>
        <taxon>Pseudomonadota</taxon>
        <taxon>Gammaproteobacteria</taxon>
        <taxon>Enterobacterales</taxon>
        <taxon>Enterobacteriaceae</taxon>
        <taxon>Escherichia</taxon>
    </lineage>
</organism>
<gene>
    <name evidence="1" type="primary">ispE</name>
    <name type="ordered locus">ECSE_1258</name>
</gene>
<evidence type="ECO:0000255" key="1">
    <source>
        <dbReference type="HAMAP-Rule" id="MF_00061"/>
    </source>
</evidence>
<proteinExistence type="inferred from homology"/>
<feature type="chain" id="PRO_1000092085" description="4-diphosphocytidyl-2-C-methyl-D-erythritol kinase">
    <location>
        <begin position="1"/>
        <end position="283"/>
    </location>
</feature>
<feature type="active site" evidence="1">
    <location>
        <position position="10"/>
    </location>
</feature>
<feature type="active site" evidence="1">
    <location>
        <position position="141"/>
    </location>
</feature>
<feature type="binding site" evidence="1">
    <location>
        <begin position="99"/>
        <end position="109"/>
    </location>
    <ligand>
        <name>ATP</name>
        <dbReference type="ChEBI" id="CHEBI:30616"/>
    </ligand>
</feature>